<name>JTX2A_CARAL</name>
<feature type="signal peptide" evidence="4">
    <location>
        <begin position="1"/>
        <end position="18"/>
    </location>
</feature>
<feature type="chain" id="PRO_0000035174" description="Toxin CaTX-A" evidence="8">
    <location>
        <begin position="19"/>
        <end position="463"/>
    </location>
</feature>
<organism>
    <name type="scientific">Carybdea alata</name>
    <name type="common">Hawaiian box jellyfish</name>
    <dbReference type="NCBI Taxonomy" id="1193083"/>
    <lineage>
        <taxon>Eukaryota</taxon>
        <taxon>Metazoa</taxon>
        <taxon>Cnidaria</taxon>
        <taxon>Cubozoa</taxon>
        <taxon>Carybdeida</taxon>
        <taxon>Alatinidae</taxon>
        <taxon>Alatina</taxon>
    </lineage>
</organism>
<keyword id="KW-0204">Cytolysis</keyword>
<keyword id="KW-0903">Direct protein sequencing</keyword>
<keyword id="KW-1015">Disulfide bond</keyword>
<keyword id="KW-0354">Hemolysis</keyword>
<keyword id="KW-0406">Ion transport</keyword>
<keyword id="KW-0472">Membrane</keyword>
<keyword id="KW-0166">Nematocyst</keyword>
<keyword id="KW-0964">Secreted</keyword>
<keyword id="KW-0732">Signal</keyword>
<keyword id="KW-1052">Target cell membrane</keyword>
<keyword id="KW-1053">Target membrane</keyword>
<keyword id="KW-0800">Toxin</keyword>
<keyword id="KW-0812">Transmembrane</keyword>
<keyword id="KW-0813">Transport</keyword>
<evidence type="ECO:0000250" key="1"/>
<evidence type="ECO:0000250" key="2">
    <source>
        <dbReference type="UniProtKB" id="A7L035"/>
    </source>
</evidence>
<evidence type="ECO:0000250" key="3">
    <source>
        <dbReference type="UniProtKB" id="Q9GV72"/>
    </source>
</evidence>
<evidence type="ECO:0000255" key="4"/>
<evidence type="ECO:0000269" key="5">
    <source>
    </source>
</evidence>
<evidence type="ECO:0000303" key="6">
    <source>
    </source>
</evidence>
<evidence type="ECO:0000305" key="7"/>
<evidence type="ECO:0000305" key="8">
    <source>
    </source>
</evidence>
<evidence type="ECO:0000312" key="9">
    <source>
        <dbReference type="EMBL" id="BAB12727.1"/>
    </source>
</evidence>
<evidence type="ECO:0000312" key="10">
    <source>
        <dbReference type="EMBL" id="BAB87816.1"/>
    </source>
</evidence>
<comment type="function">
    <text evidence="5 8">Has potent hemolytic activity (PubMed:10964708). Is lethal to crayfish (PubMed:10964708). Causes cutaneous inflammation in humans (Probable). May act as a pore-forming toxin, disrupting normal transmembrane ion concentration gradients in susceptible cells (Probable).</text>
</comment>
<comment type="subunit">
    <text evidence="2">Oligomer.</text>
</comment>
<comment type="subcellular location">
    <subcellularLocation>
        <location evidence="5">Secreted</location>
    </subcellularLocation>
    <subcellularLocation>
        <location evidence="5">Nematocyst</location>
    </subcellularLocation>
    <subcellularLocation>
        <location evidence="1">Target cell membrane</location>
    </subcellularLocation>
    <text evidence="1">Forms a membrane channel in the prey.</text>
</comment>
<comment type="tissue specificity">
    <text evidence="3 8">It is suggested that CaTX-B is synthesized in the tentacle, is modified (become CaTX-A) and then migrates to the nematocyst.</text>
</comment>
<comment type="PTM">
    <text evidence="7">Contains disulfide bonds.</text>
</comment>
<comment type="toxic dose">
    <text evidence="5">LD(50) is 5-25 ug/kg by intraperitoneal injection into crayfish.</text>
</comment>
<comment type="miscellaneous">
    <text evidence="5 8">CaTX-A and CaTX-B are probably encoded by the same gene (Probable). They differ by their molecular masses (43 and 45 kDa, respectively) (PubMed:10964708). In addition, CaTX-A is primarily localized in nematocysts, whereas CaTX-B is only detected in the tentacles without nematocyst (PubMed:10964708).</text>
</comment>
<comment type="similarity">
    <text evidence="7">Belongs to the jellyfish toxin family. Type II subfamily.</text>
</comment>
<protein>
    <recommendedName>
        <fullName evidence="6">Toxin CaTX-A</fullName>
        <shortName evidence="6">Toxin-A</shortName>
    </recommendedName>
    <alternativeName>
        <fullName evidence="9 10">CAT-1</fullName>
    </alternativeName>
    <alternativeName>
        <fullName evidence="6">Toxin CaTX-B</fullName>
        <shortName evidence="6">Toxin-B</shortName>
    </alternativeName>
</protein>
<reference key="1">
    <citation type="journal article" date="2000" name="Biochem. Biophys. Res. Commun.">
        <title>Isolation and characterization of a novel protein toxin from the Hawaiian box jellyfish (sea wasp) Carybdea alata.</title>
        <authorList>
            <person name="Nagai H."/>
            <person name="Takuwa K."/>
            <person name="Nakao M."/>
            <person name="Sakamoto B."/>
            <person name="Crow G.L."/>
            <person name="Nakajima T."/>
        </authorList>
    </citation>
    <scope>NUCLEOTIDE SEQUENCE [MRNA]</scope>
    <scope>PROTEIN SEQUENCE OF 158-168 AND 431-448</scope>
    <scope>TOXIC DOSE</scope>
    <scope>SUBCELLULAR LOCATION</scope>
    <scope>TISSUE SPECIFICITY</scope>
    <scope>FUNCTION</scope>
    <source>
        <tissue>Tentacle</tissue>
    </source>
</reference>
<proteinExistence type="evidence at protein level"/>
<dbReference type="EMBL" id="AB036714">
    <property type="protein sequence ID" value="BAB12727.1"/>
    <property type="molecule type" value="mRNA"/>
</dbReference>
<dbReference type="EMBL" id="AB038156">
    <property type="protein sequence ID" value="BAB87816.1"/>
    <property type="molecule type" value="mRNA"/>
</dbReference>
<dbReference type="PIR" id="JC7372">
    <property type="entry name" value="JC7372"/>
</dbReference>
<dbReference type="SMR" id="Q9GNN8"/>
<dbReference type="TCDB" id="1.C.112.1.1">
    <property type="family name" value="the cubozoan protein toxin (cpt) family"/>
</dbReference>
<dbReference type="GO" id="GO:0005576">
    <property type="term" value="C:extracellular region"/>
    <property type="evidence" value="ECO:0007669"/>
    <property type="project" value="UniProtKB-SubCell"/>
</dbReference>
<dbReference type="GO" id="GO:0016020">
    <property type="term" value="C:membrane"/>
    <property type="evidence" value="ECO:0007669"/>
    <property type="project" value="UniProtKB-KW"/>
</dbReference>
<dbReference type="GO" id="GO:0042151">
    <property type="term" value="C:nematocyst"/>
    <property type="evidence" value="ECO:0007669"/>
    <property type="project" value="UniProtKB-SubCell"/>
</dbReference>
<dbReference type="GO" id="GO:0044218">
    <property type="term" value="C:other organism cell membrane"/>
    <property type="evidence" value="ECO:0007669"/>
    <property type="project" value="UniProtKB-KW"/>
</dbReference>
<dbReference type="GO" id="GO:0090729">
    <property type="term" value="F:toxin activity"/>
    <property type="evidence" value="ECO:0007669"/>
    <property type="project" value="UniProtKB-KW"/>
</dbReference>
<dbReference type="GO" id="GO:0031640">
    <property type="term" value="P:killing of cells of another organism"/>
    <property type="evidence" value="ECO:0007669"/>
    <property type="project" value="UniProtKB-KW"/>
</dbReference>
<dbReference type="GO" id="GO:0006811">
    <property type="term" value="P:monoatomic ion transport"/>
    <property type="evidence" value="ECO:0007669"/>
    <property type="project" value="UniProtKB-KW"/>
</dbReference>
<dbReference type="Gene3D" id="1.20.190.10">
    <property type="entry name" value="Pesticidal crystal protein, N-terminal domain"/>
    <property type="match status" value="1"/>
</dbReference>
<dbReference type="InterPro" id="IPR036716">
    <property type="entry name" value="Pest_crys_N_sf"/>
</dbReference>
<sequence length="463" mass="51605">MSRGYSLHLVLFLVLSTAFPSQARLSRYRRSAADAVSTDIDGIIGQLNDLGTDTKRLKEALQGVQEAVKKEPATTIAKVSTIVGSVGGSLSKFKSGDPFDVASGCLDIIASVATTFGGPYGIAIGAVASLISSILSLFSGNSMGSAIKQVIDDAFKKYRDQELEDNVKGAKRTFNAVITFVNSVSKTENLTEVHLDSVRDAVRVDAFTNMLGVLESRINRGSVSTDNNEAMRTINFIFLYLQLSVMRETLLTQVILLYKRAGGAYDELALSLSLTSDQNKEATRETVTFLHQMETKYSLCGSYYYPIDHSKAAIGILKLTKFFGVPDPARYTFDGLYYRMQNRAWNRYSICKESYAGNHMFRGCKDSSYHGIRIKKLENGYHTITLRSKAMYVTKHAQGWGWGTADEDPGEQGYFTFIPLTNGFYMVSTKKWPDYFVYMESSAHGYIRSWHYNPDPQGQWKIL</sequence>
<accession>Q9GNN8</accession>
<accession>Q54AF4</accession>